<comment type="function">
    <text evidence="1">One of the primary rRNA binding proteins, it binds directly to 16S rRNA where it nucleates assembly of the body of the 30S subunit.</text>
</comment>
<comment type="function">
    <text evidence="1">With S5 and S12 plays an important role in translational accuracy.</text>
</comment>
<comment type="subunit">
    <text evidence="1">Part of the 30S ribosomal subunit. Contacts protein S5. The interaction surface between S4 and S5 is involved in control of translational fidelity.</text>
</comment>
<comment type="similarity">
    <text evidence="1">Belongs to the universal ribosomal protein uS4 family.</text>
</comment>
<comment type="sequence caution" evidence="2">
    <conflict type="erroneous initiation">
        <sequence resource="EMBL-CDS" id="CAD71980"/>
    </conflict>
</comment>
<accession>Q7UXM6</accession>
<keyword id="KW-1185">Reference proteome</keyword>
<keyword id="KW-0687">Ribonucleoprotein</keyword>
<keyword id="KW-0689">Ribosomal protein</keyword>
<keyword id="KW-0694">RNA-binding</keyword>
<keyword id="KW-0699">rRNA-binding</keyword>
<gene>
    <name evidence="1" type="primary">rpsD</name>
    <name type="ordered locus">RB1233</name>
</gene>
<dbReference type="EMBL" id="BX294135">
    <property type="protein sequence ID" value="CAD71980.1"/>
    <property type="status" value="ALT_INIT"/>
    <property type="molecule type" value="Genomic_DNA"/>
</dbReference>
<dbReference type="RefSeq" id="NP_864301.1">
    <property type="nucleotide sequence ID" value="NC_005027.1"/>
</dbReference>
<dbReference type="SMR" id="Q7UXM6"/>
<dbReference type="FunCoup" id="Q7UXM6">
    <property type="interactions" value="618"/>
</dbReference>
<dbReference type="STRING" id="243090.RB1233"/>
<dbReference type="EnsemblBacteria" id="CAD71980">
    <property type="protein sequence ID" value="CAD71980"/>
    <property type="gene ID" value="RB1233"/>
</dbReference>
<dbReference type="KEGG" id="rba:RB1233"/>
<dbReference type="PATRIC" id="fig|243090.15.peg.565"/>
<dbReference type="eggNOG" id="COG0522">
    <property type="taxonomic scope" value="Bacteria"/>
</dbReference>
<dbReference type="HOGENOM" id="CLU_092403_0_1_0"/>
<dbReference type="InParanoid" id="Q7UXM6"/>
<dbReference type="OrthoDB" id="9803672at2"/>
<dbReference type="Proteomes" id="UP000001025">
    <property type="component" value="Chromosome"/>
</dbReference>
<dbReference type="GO" id="GO:0015935">
    <property type="term" value="C:small ribosomal subunit"/>
    <property type="evidence" value="ECO:0000318"/>
    <property type="project" value="GO_Central"/>
</dbReference>
<dbReference type="GO" id="GO:0019843">
    <property type="term" value="F:rRNA binding"/>
    <property type="evidence" value="ECO:0000318"/>
    <property type="project" value="GO_Central"/>
</dbReference>
<dbReference type="GO" id="GO:0003735">
    <property type="term" value="F:structural constituent of ribosome"/>
    <property type="evidence" value="ECO:0000318"/>
    <property type="project" value="GO_Central"/>
</dbReference>
<dbReference type="GO" id="GO:0042274">
    <property type="term" value="P:ribosomal small subunit biogenesis"/>
    <property type="evidence" value="ECO:0000318"/>
    <property type="project" value="GO_Central"/>
</dbReference>
<dbReference type="GO" id="GO:0006412">
    <property type="term" value="P:translation"/>
    <property type="evidence" value="ECO:0007669"/>
    <property type="project" value="UniProtKB-UniRule"/>
</dbReference>
<dbReference type="CDD" id="cd00165">
    <property type="entry name" value="S4"/>
    <property type="match status" value="1"/>
</dbReference>
<dbReference type="FunFam" id="3.10.290.10:FF:000001">
    <property type="entry name" value="30S ribosomal protein S4"/>
    <property type="match status" value="1"/>
</dbReference>
<dbReference type="Gene3D" id="1.10.1050.10">
    <property type="entry name" value="Ribosomal Protein S4 Delta 41, Chain A, domain 1"/>
    <property type="match status" value="1"/>
</dbReference>
<dbReference type="Gene3D" id="3.10.290.10">
    <property type="entry name" value="RNA-binding S4 domain"/>
    <property type="match status" value="1"/>
</dbReference>
<dbReference type="HAMAP" id="MF_01306_B">
    <property type="entry name" value="Ribosomal_uS4_B"/>
    <property type="match status" value="1"/>
</dbReference>
<dbReference type="InterPro" id="IPR022801">
    <property type="entry name" value="Ribosomal_uS4"/>
</dbReference>
<dbReference type="InterPro" id="IPR005709">
    <property type="entry name" value="Ribosomal_uS4_bac-type"/>
</dbReference>
<dbReference type="InterPro" id="IPR001912">
    <property type="entry name" value="Ribosomal_uS4_N"/>
</dbReference>
<dbReference type="InterPro" id="IPR002942">
    <property type="entry name" value="S4_RNA-bd"/>
</dbReference>
<dbReference type="InterPro" id="IPR036986">
    <property type="entry name" value="S4_RNA-bd_sf"/>
</dbReference>
<dbReference type="NCBIfam" id="NF003717">
    <property type="entry name" value="PRK05327.1"/>
    <property type="match status" value="1"/>
</dbReference>
<dbReference type="NCBIfam" id="TIGR01017">
    <property type="entry name" value="rpsD_bact"/>
    <property type="match status" value="1"/>
</dbReference>
<dbReference type="PANTHER" id="PTHR11831">
    <property type="entry name" value="30S 40S RIBOSOMAL PROTEIN"/>
    <property type="match status" value="1"/>
</dbReference>
<dbReference type="PANTHER" id="PTHR11831:SF4">
    <property type="entry name" value="SMALL RIBOSOMAL SUBUNIT PROTEIN US4M"/>
    <property type="match status" value="1"/>
</dbReference>
<dbReference type="Pfam" id="PF00163">
    <property type="entry name" value="Ribosomal_S4"/>
    <property type="match status" value="1"/>
</dbReference>
<dbReference type="Pfam" id="PF01479">
    <property type="entry name" value="S4"/>
    <property type="match status" value="1"/>
</dbReference>
<dbReference type="SMART" id="SM01390">
    <property type="entry name" value="Ribosomal_S4"/>
    <property type="match status" value="1"/>
</dbReference>
<dbReference type="SMART" id="SM00363">
    <property type="entry name" value="S4"/>
    <property type="match status" value="1"/>
</dbReference>
<dbReference type="SUPFAM" id="SSF55174">
    <property type="entry name" value="Alpha-L RNA-binding motif"/>
    <property type="match status" value="1"/>
</dbReference>
<dbReference type="PROSITE" id="PS50889">
    <property type="entry name" value="S4"/>
    <property type="match status" value="1"/>
</dbReference>
<reference key="1">
    <citation type="journal article" date="2003" name="Proc. Natl. Acad. Sci. U.S.A.">
        <title>Complete genome sequence of the marine planctomycete Pirellula sp. strain 1.</title>
        <authorList>
            <person name="Gloeckner F.O."/>
            <person name="Kube M."/>
            <person name="Bauer M."/>
            <person name="Teeling H."/>
            <person name="Lombardot T."/>
            <person name="Ludwig W."/>
            <person name="Gade D."/>
            <person name="Beck A."/>
            <person name="Borzym K."/>
            <person name="Heitmann K."/>
            <person name="Rabus R."/>
            <person name="Schlesner H."/>
            <person name="Amann R."/>
            <person name="Reinhardt R."/>
        </authorList>
    </citation>
    <scope>NUCLEOTIDE SEQUENCE [LARGE SCALE GENOMIC DNA]</scope>
    <source>
        <strain>DSM 10527 / NCIMB 13988 / SH1</strain>
    </source>
</reference>
<name>RS4_RHOBA</name>
<protein>
    <recommendedName>
        <fullName evidence="1">Small ribosomal subunit protein uS4</fullName>
    </recommendedName>
    <alternativeName>
        <fullName evidence="2">30S ribosomal protein S4</fullName>
    </alternativeName>
</protein>
<feature type="chain" id="PRO_0000132444" description="Small ribosomal subunit protein uS4">
    <location>
        <begin position="1"/>
        <end position="202"/>
    </location>
</feature>
<feature type="domain" description="S4 RNA-binding" evidence="1">
    <location>
        <begin position="93"/>
        <end position="155"/>
    </location>
</feature>
<sequence>MARYTGPKARINRRLGTMLYETAGAARAMDRRPQPPGMHTRGRRPSNYGAALMEKQKIKHYYGLGERQLRRYFENVGRKSGNTGELLLLMCERRLDNVVRRVGFTKTRPQARQGITHGHFRVNGVKVTKPGYMLRAGDLIEVRGRENLKNLYRGVIANSPPDGLDWVSFDSETLRATVLSLPGAVDISLPVDANSVVEFLSR</sequence>
<proteinExistence type="inferred from homology"/>
<evidence type="ECO:0000255" key="1">
    <source>
        <dbReference type="HAMAP-Rule" id="MF_01306"/>
    </source>
</evidence>
<evidence type="ECO:0000305" key="2"/>
<organism>
    <name type="scientific">Rhodopirellula baltica (strain DSM 10527 / NCIMB 13988 / SH1)</name>
    <dbReference type="NCBI Taxonomy" id="243090"/>
    <lineage>
        <taxon>Bacteria</taxon>
        <taxon>Pseudomonadati</taxon>
        <taxon>Planctomycetota</taxon>
        <taxon>Planctomycetia</taxon>
        <taxon>Pirellulales</taxon>
        <taxon>Pirellulaceae</taxon>
        <taxon>Rhodopirellula</taxon>
    </lineage>
</organism>